<proteinExistence type="evidence at transcript level"/>
<organism>
    <name type="scientific">Rotavirus A (isolate RVA/Human/India/116E/1986/G9P8[11])</name>
    <name type="common">RV-A</name>
    <dbReference type="NCBI Taxonomy" id="638299"/>
    <lineage>
        <taxon>Viruses</taxon>
        <taxon>Riboviria</taxon>
        <taxon>Orthornavirae</taxon>
        <taxon>Duplornaviricota</taxon>
        <taxon>Resentoviricetes</taxon>
        <taxon>Reovirales</taxon>
        <taxon>Sedoreoviridae</taxon>
        <taxon>Rotavirus</taxon>
        <taxon>Rotavirus A</taxon>
    </lineage>
</organism>
<evidence type="ECO:0000255" key="1">
    <source>
        <dbReference type="HAMAP-Rule" id="MF_04088"/>
    </source>
</evidence>
<dbReference type="EMBL" id="U85999">
    <property type="protein sequence ID" value="AAB46986.1"/>
    <property type="molecule type" value="mRNA"/>
</dbReference>
<dbReference type="GO" id="GO:0030430">
    <property type="term" value="C:host cell cytoplasm"/>
    <property type="evidence" value="ECO:0007669"/>
    <property type="project" value="UniProtKB-UniRule"/>
</dbReference>
<dbReference type="GO" id="GO:0044163">
    <property type="term" value="C:host cytoskeleton"/>
    <property type="evidence" value="ECO:0007669"/>
    <property type="project" value="UniProtKB-SubCell"/>
</dbReference>
<dbReference type="GO" id="GO:0046872">
    <property type="term" value="F:metal ion binding"/>
    <property type="evidence" value="ECO:0007669"/>
    <property type="project" value="UniProtKB-UniRule"/>
</dbReference>
<dbReference type="GO" id="GO:0003723">
    <property type="term" value="F:RNA binding"/>
    <property type="evidence" value="ECO:0007669"/>
    <property type="project" value="UniProtKB-UniRule"/>
</dbReference>
<dbReference type="GO" id="GO:0039548">
    <property type="term" value="P:symbiont-mediated suppression of host cytoplasmic pattern recognition receptor signaling pathway via inhibition of IRF3 activity"/>
    <property type="evidence" value="ECO:0007669"/>
    <property type="project" value="UniProtKB-UniRule"/>
</dbReference>
<dbReference type="GO" id="GO:0039557">
    <property type="term" value="P:symbiont-mediated suppression of host cytoplasmic pattern recognition receptor signaling pathway via inhibition of IRF7 activity"/>
    <property type="evidence" value="ECO:0007669"/>
    <property type="project" value="UniProtKB-UniRule"/>
</dbReference>
<dbReference type="GO" id="GO:0085034">
    <property type="term" value="P:symbiont-mediated suppression of host NF-kappaB cascade"/>
    <property type="evidence" value="ECO:0007669"/>
    <property type="project" value="UniProtKB-UniRule"/>
</dbReference>
<dbReference type="HAMAP" id="MF_04088">
    <property type="entry name" value="ROTA_NSP1"/>
    <property type="match status" value="1"/>
</dbReference>
<dbReference type="InterPro" id="IPR002148">
    <property type="entry name" value="Rotavirus_NSP1"/>
</dbReference>
<dbReference type="Pfam" id="PF00981">
    <property type="entry name" value="Rota_NS53"/>
    <property type="match status" value="1"/>
</dbReference>
<keyword id="KW-1035">Host cytoplasm</keyword>
<keyword id="KW-1037">Host cytoskeleton</keyword>
<keyword id="KW-0945">Host-virus interaction</keyword>
<keyword id="KW-1090">Inhibition of host innate immune response by virus</keyword>
<keyword id="KW-1092">Inhibition of host IRF3 by virus</keyword>
<keyword id="KW-1093">Inhibition of host IRF7 by virus</keyword>
<keyword id="KW-1100">Inhibition of host NF-kappa-B by virus</keyword>
<keyword id="KW-1113">Inhibition of host RLR pathway by virus</keyword>
<keyword id="KW-0922">Interferon antiviral system evasion</keyword>
<keyword id="KW-0479">Metal-binding</keyword>
<keyword id="KW-0597">Phosphoprotein</keyword>
<keyword id="KW-0694">RNA-binding</keyword>
<keyword id="KW-0899">Viral immunoevasion</keyword>
<feature type="chain" id="PRO_0000369074" description="Non-structural protein 1">
    <location>
        <begin position="1"/>
        <end position="486"/>
    </location>
</feature>
<feature type="region of interest" description="RNA-binding" evidence="1">
    <location>
        <begin position="1"/>
        <end position="81"/>
    </location>
</feature>
<feature type="region of interest" description="Zinc-binding domain" evidence="1">
    <location>
        <begin position="42"/>
        <end position="79"/>
    </location>
</feature>
<feature type="region of interest" description="Important for cytoskeleton localization" evidence="1">
    <location>
        <begin position="82"/>
        <end position="176"/>
    </location>
</feature>
<feature type="region of interest" description="Interaction with host IRF3" evidence="1">
    <location>
        <begin position="317"/>
        <end position="486"/>
    </location>
</feature>
<feature type="short sequence motif" description="IKBKB-like degron (ILD) motif" evidence="1">
    <location>
        <begin position="479"/>
        <end position="483"/>
    </location>
</feature>
<feature type="short sequence motif" description="pLxIS motif" evidence="1">
    <location>
        <begin position="480"/>
        <end position="483"/>
    </location>
</feature>
<organismHost>
    <name type="scientific">Homo sapiens</name>
    <name type="common">Human</name>
    <dbReference type="NCBI Taxonomy" id="9606"/>
</organismHost>
<protein>
    <recommendedName>
        <fullName evidence="1">Non-structural protein 1</fullName>
        <shortName evidence="1">NSP1</shortName>
    </recommendedName>
    <alternativeName>
        <fullName evidence="1">NCVP2</fullName>
    </alternativeName>
    <alternativeName>
        <fullName evidence="1">Non-structural RNA-binding protein 53</fullName>
        <shortName evidence="1">NS53</shortName>
    </alternativeName>
</protein>
<accession>P87724</accession>
<comment type="function">
    <text evidence="1">Plays a role in the inhibition of host innate immunity by inducing the degradation of key host factors required to activate interferon production such as IRF3, IRF5 or IRF7. Associates with components of cullin RING ligases (CRLs) including CUL1 or CUL3, which are essential multisubunit ubiquitination complexes, to modulate their activities. Recognizes the host NF-kappa-B regulator BTRC through the presence of a DSGXS motif in the C-terminal substrate recognition domain.</text>
</comment>
<comment type="subunit">
    <text evidence="1">Interacts (via C-terminus) with host IRF3; this interaction leads to IRF3 degradation. Interacts with host IRF7; this interaction leads to IRF7 degradation. Interacts with host CUL1 and CUL3. Interacts with host BTRC.</text>
</comment>
<comment type="subcellular location">
    <subcellularLocation>
        <location evidence="1">Host cytoplasm</location>
        <location evidence="1">Host cytoskeleton</location>
    </subcellularLocation>
</comment>
<comment type="domain">
    <text evidence="1">The integrity of the zinc-binding domain in NSP1 is important for degradation of host IRF3.</text>
</comment>
<comment type="domain">
    <text evidence="1">The pLxIS motif targets host IRF3 for degradation; however phosphorylation of NSP1 pLxIS motif is not required for its activity.</text>
</comment>
<comment type="PTM">
    <text evidence="1">The C-terminal region is phosphorylated by host CKII/CSNK2A1. Phosphorylation of the DSGXS motif is essential for host NF-kappa-B inhibition.</text>
</comment>
<comment type="similarity">
    <text evidence="1">Belongs to the rotavirus NSP1 family.</text>
</comment>
<name>NSP1_ROTHU</name>
<reference key="1">
    <citation type="journal article" date="1997" name="Virus Genes">
        <title>Sequence analysis demonstrates that VP6, NSP1 and NSP4 genes of Indian neonatal rotavirus strain 116E are of human origin.</title>
        <authorList>
            <person name="Cunliffe N.A."/>
            <person name="Das B.K."/>
            <person name="Ramachandran M."/>
            <person name="Bhan M.K."/>
            <person name="Glass R.I."/>
            <person name="Gentsch J.R."/>
        </authorList>
    </citation>
    <scope>NUCLEOTIDE SEQUENCE [MRNA]</scope>
</reference>
<sequence>MATFKDACYHYKRINKLNQTVLKLGVNDTWRPSPPTKYKGWCLDCCQHTDLTYCRGCTIYHVCQWCSQYGRCFLDDEPHLLRMRTFKNEVTKDNLKNLIDMYNTLFPITQKIIHRFINNTRQHKCRNECMTQWYNHLLMPITLQSLSIELDGDVYYIFGYYDSMNNINQTPFSFTNLVDIYDKLLLDDVNFVRMSFLPTSLQREYALRYFSKSRFISEQRKCVNDSHFSINVLENLYNPNFKVQITRNCSELSVDWNEACKLVKNVSAYFDILKTSHVEFYSVSTRCRIFTRCKLEMASKLIKPNYVTSNHKTLATEVRNCKWCSINNSYTVWNDFRIKKIYNNIFSFLRALVKSNVNIGHCSSQEKIYEYVENVLNVCDDKRWKTSIMEIFNCLEPVELNDVKYVLFNYEINWDVINVLIHSIGKVPQILTLENVITIIQSIVYEWFDITYMRNTPMVTFTIDKLRRLHIGLKTVDSDSGISDVE</sequence>